<protein>
    <recommendedName>
        <fullName evidence="1">Chaperonin GroEL 2</fullName>
        <ecNumber evidence="1">5.6.1.7</ecNumber>
    </recommendedName>
    <alternativeName>
        <fullName evidence="1">60 kDa chaperonin 2</fullName>
    </alternativeName>
    <alternativeName>
        <fullName evidence="1">Chaperonin-60 2</fullName>
        <shortName evidence="1">Cpn60 2</shortName>
    </alternativeName>
</protein>
<proteinExistence type="inferred from homology"/>
<dbReference type="EC" id="5.6.1.7" evidence="1"/>
<dbReference type="EMBL" id="D86384">
    <property type="protein sequence ID" value="BAA13082.1"/>
    <property type="molecule type" value="Genomic_DNA"/>
</dbReference>
<dbReference type="SMR" id="P0A338"/>
<dbReference type="GO" id="GO:0005737">
    <property type="term" value="C:cytoplasm"/>
    <property type="evidence" value="ECO:0007669"/>
    <property type="project" value="UniProtKB-SubCell"/>
</dbReference>
<dbReference type="GO" id="GO:0005524">
    <property type="term" value="F:ATP binding"/>
    <property type="evidence" value="ECO:0007669"/>
    <property type="project" value="UniProtKB-UniRule"/>
</dbReference>
<dbReference type="GO" id="GO:0140662">
    <property type="term" value="F:ATP-dependent protein folding chaperone"/>
    <property type="evidence" value="ECO:0007669"/>
    <property type="project" value="InterPro"/>
</dbReference>
<dbReference type="GO" id="GO:0016853">
    <property type="term" value="F:isomerase activity"/>
    <property type="evidence" value="ECO:0007669"/>
    <property type="project" value="UniProtKB-KW"/>
</dbReference>
<dbReference type="GO" id="GO:0051082">
    <property type="term" value="F:unfolded protein binding"/>
    <property type="evidence" value="ECO:0007669"/>
    <property type="project" value="UniProtKB-UniRule"/>
</dbReference>
<dbReference type="GO" id="GO:0042026">
    <property type="term" value="P:protein refolding"/>
    <property type="evidence" value="ECO:0007669"/>
    <property type="project" value="UniProtKB-UniRule"/>
</dbReference>
<dbReference type="CDD" id="cd03344">
    <property type="entry name" value="GroEL"/>
    <property type="match status" value="1"/>
</dbReference>
<dbReference type="FunFam" id="3.50.7.10:FF:000001">
    <property type="entry name" value="60 kDa chaperonin"/>
    <property type="match status" value="1"/>
</dbReference>
<dbReference type="Gene3D" id="3.50.7.10">
    <property type="entry name" value="GroEL"/>
    <property type="match status" value="1"/>
</dbReference>
<dbReference type="Gene3D" id="1.10.560.10">
    <property type="entry name" value="GroEL-like equatorial domain"/>
    <property type="match status" value="1"/>
</dbReference>
<dbReference type="Gene3D" id="3.30.260.10">
    <property type="entry name" value="TCP-1-like chaperonin intermediate domain"/>
    <property type="match status" value="1"/>
</dbReference>
<dbReference type="HAMAP" id="MF_00600">
    <property type="entry name" value="CH60"/>
    <property type="match status" value="1"/>
</dbReference>
<dbReference type="InterPro" id="IPR001844">
    <property type="entry name" value="Cpn60/GroEL"/>
</dbReference>
<dbReference type="InterPro" id="IPR002423">
    <property type="entry name" value="Cpn60/GroEL/TCP-1"/>
</dbReference>
<dbReference type="InterPro" id="IPR027409">
    <property type="entry name" value="GroEL-like_apical_dom_sf"/>
</dbReference>
<dbReference type="InterPro" id="IPR027413">
    <property type="entry name" value="GROEL-like_equatorial_sf"/>
</dbReference>
<dbReference type="InterPro" id="IPR027410">
    <property type="entry name" value="TCP-1-like_intermed_sf"/>
</dbReference>
<dbReference type="NCBIfam" id="TIGR02348">
    <property type="entry name" value="GroEL"/>
    <property type="match status" value="1"/>
</dbReference>
<dbReference type="NCBIfam" id="NF000592">
    <property type="entry name" value="PRK00013.1"/>
    <property type="match status" value="1"/>
</dbReference>
<dbReference type="NCBIfam" id="NF009487">
    <property type="entry name" value="PRK12849.1"/>
    <property type="match status" value="1"/>
</dbReference>
<dbReference type="NCBIfam" id="NF009488">
    <property type="entry name" value="PRK12850.1"/>
    <property type="match status" value="1"/>
</dbReference>
<dbReference type="NCBIfam" id="NF009489">
    <property type="entry name" value="PRK12851.1"/>
    <property type="match status" value="1"/>
</dbReference>
<dbReference type="PANTHER" id="PTHR45633">
    <property type="entry name" value="60 KDA HEAT SHOCK PROTEIN, MITOCHONDRIAL"/>
    <property type="match status" value="1"/>
</dbReference>
<dbReference type="Pfam" id="PF00118">
    <property type="entry name" value="Cpn60_TCP1"/>
    <property type="match status" value="1"/>
</dbReference>
<dbReference type="PRINTS" id="PR00298">
    <property type="entry name" value="CHAPERONIN60"/>
</dbReference>
<dbReference type="SUPFAM" id="SSF52029">
    <property type="entry name" value="GroEL apical domain-like"/>
    <property type="match status" value="1"/>
</dbReference>
<dbReference type="SUPFAM" id="SSF48592">
    <property type="entry name" value="GroEL equatorial domain-like"/>
    <property type="match status" value="1"/>
</dbReference>
<dbReference type="SUPFAM" id="SSF54849">
    <property type="entry name" value="GroEL-intermediate domain like"/>
    <property type="match status" value="1"/>
</dbReference>
<keyword id="KW-0067">ATP-binding</keyword>
<keyword id="KW-0143">Chaperone</keyword>
<keyword id="KW-0963">Cytoplasm</keyword>
<keyword id="KW-0413">Isomerase</keyword>
<keyword id="KW-0547">Nucleotide-binding</keyword>
<name>CH602_THEVL</name>
<reference key="1">
    <citation type="journal article" date="1996" name="Biochim. Biophys. Acta">
        <title>Cloning, characterization and functional analysis of groEL-like gene from thermophilic cyanobacterium Synechococcus vulcanus, which does not form an operon with groES.</title>
        <authorList>
            <person name="Furuki M."/>
            <person name="Tanaka N."/>
            <person name="Hiyama T."/>
            <person name="Nakamoto H."/>
        </authorList>
    </citation>
    <scope>NUCLEOTIDE SEQUENCE [GENOMIC DNA]</scope>
</reference>
<evidence type="ECO:0000255" key="1">
    <source>
        <dbReference type="HAMAP-Rule" id="MF_00600"/>
    </source>
</evidence>
<feature type="chain" id="PRO_0000063574" description="Chaperonin GroEL 2">
    <location>
        <begin position="1"/>
        <end position="543"/>
    </location>
</feature>
<feature type="binding site" evidence="1">
    <location>
        <begin position="29"/>
        <end position="32"/>
    </location>
    <ligand>
        <name>ATP</name>
        <dbReference type="ChEBI" id="CHEBI:30616"/>
    </ligand>
</feature>
<feature type="binding site" evidence="1">
    <location>
        <begin position="86"/>
        <end position="90"/>
    </location>
    <ligand>
        <name>ATP</name>
        <dbReference type="ChEBI" id="CHEBI:30616"/>
    </ligand>
</feature>
<feature type="binding site" evidence="1">
    <location>
        <position position="413"/>
    </location>
    <ligand>
        <name>ATP</name>
        <dbReference type="ChEBI" id="CHEBI:30616"/>
    </ligand>
</feature>
<feature type="binding site" evidence="1">
    <location>
        <begin position="478"/>
        <end position="480"/>
    </location>
    <ligand>
        <name>ATP</name>
        <dbReference type="ChEBI" id="CHEBI:30616"/>
    </ligand>
</feature>
<feature type="binding site" evidence="1">
    <location>
        <position position="494"/>
    </location>
    <ligand>
        <name>ATP</name>
        <dbReference type="ChEBI" id="CHEBI:30616"/>
    </ligand>
</feature>
<gene>
    <name evidence="1" type="primary">groEL2</name>
    <name evidence="1" type="synonym">groL2</name>
</gene>
<organism>
    <name type="scientific">Thermostichus vulcanus</name>
    <name type="common">Synechococcus vulcanus</name>
    <dbReference type="NCBI Taxonomy" id="32053"/>
    <lineage>
        <taxon>Bacteria</taxon>
        <taxon>Bacillati</taxon>
        <taxon>Cyanobacteriota</taxon>
        <taxon>Cyanophyceae</taxon>
        <taxon>Thermostichales</taxon>
        <taxon>Thermostichaceae</taxon>
        <taxon>Thermostichus</taxon>
    </lineage>
</organism>
<sequence length="543" mass="57103">MAKLVAFHEESRRSLERGINALADAVKITLGPKGRNVVLEKKYGAPQIVNDGVTIAKEIELEDAYENTGAQLMREVAAKTNDVVGDGTTTATVLAQALIREGLKNVAAGTNPIALKRGMEKAIKTIVDGIAEVAKPVEGDMIAQVATVSAGNDPEVGAMISEAMAKVGKDGVITIEESKSLQTEMEIVEGMQFDRGYISPYFVTDPERMIVQLNNAYLLLTDKKITSIQDLIPTLERVARSGRPLVIIAEDVEGEALATLVVNKLRGVLNVVAVKAPAFGERRKAMLQDIAILTGGQVISEEVGLTLEDVELTMLGEASSVTVTKDTTILVSEKGNKADIQKRVEQLKQQLAETDSEYDKEKLQERIAKLVGGVAVIKVGAATETELKDRKLRLEDALNATKAAVAEGIVPGGGVTLLHLASRIDALLPSLSPEEQTGARIVASALAAPVAQIADNAGAEGAVVVENVRAGDFNYGFNAATGAYEDLVSAGIIDPAKVVRSALQNAGSIAGMVLTTEALVVEKPEPKPAAPANGGMGGMGGMM</sequence>
<comment type="function">
    <text evidence="1">Together with its co-chaperonin GroES, plays an essential role in assisting protein folding. The GroEL-GroES system forms a nano-cage that allows encapsulation of the non-native substrate proteins and provides a physical environment optimized to promote and accelerate protein folding.</text>
</comment>
<comment type="catalytic activity">
    <reaction evidence="1">
        <text>ATP + H2O + a folded polypeptide = ADP + phosphate + an unfolded polypeptide.</text>
        <dbReference type="EC" id="5.6.1.7"/>
    </reaction>
</comment>
<comment type="subunit">
    <text evidence="1">Forms a cylinder of 14 subunits composed of two heptameric rings stacked back-to-back. Interacts with the co-chaperonin GroES.</text>
</comment>
<comment type="subcellular location">
    <subcellularLocation>
        <location evidence="1">Cytoplasm</location>
    </subcellularLocation>
</comment>
<comment type="similarity">
    <text evidence="1">Belongs to the chaperonin (HSP60) family.</text>
</comment>
<accession>P0A338</accession>
<accession>Q57002</accession>